<sequence>MGKKRIMFFASLLLITIFLSFSYAGITRESPLSIGKTLSSSNGVYELGFFSFNNSQNQYVGIWFKGIIPRVVVWVANREKPVTDSAANLTISSNGSLLLFNENHSVVWSIGETFASNGSRAELTDNGNLVVIDNNSGRTLWESFEHFGDTMLPFSNLMYNLATGEKRVLTSWKSHTDPSPGDFTVQITPQVPSQACTMRGSKTYWRSGPWAKTRFTGIPVMDDTYTSPFSLQQDTNGSGSFTYFERNFKLSYIMITSEGSLKIFQHNGMDWELNFEAPENSCDIYGFCGPFGICVMSVPPKCKCFKGFVPKSIEEWKRGNWTDGCVRHTELHCQGNTNGKTVNGFYHVANIKPPDFYEFASFVDAEGCYQICLHNCSCLAFAYINGIGCLMWNQDLMDAVQFSAGGEILSIRLASSELGGNKRNKIIVASIVSLSLFVILAFAAFCFLRYKVKHTVSAKISKIASKEAWNNDLEPQDVSGLKFFEMNTIQTATDNFSLSNKLGQGGFGSVYKGKLQDGKEIAVKRLSSSSGQGKEEFMNEIVLISKLQHKNLVRILGCCIEGEERLLVYEFLLNKSLDTFLFDSRKRLEIDWPKRFNIIEGIARGLHYLHRDSCLRVIHRDLKVSNILLDEKMNPKISDFGLARMYQGTEYQDNTRRVAGTLGYMAPEYAWTGMFSEKSDIYSFGVILLEIITGEKISRFSYGRQGKTLLAYAWESWCESGGIDLLDKDVADSCHPLEVERCVQIGLLCVQHQPADRPNTMELLSMLTTTSDLTSPKQPTFVVHTRDEESLSQGLITVNEMTQSVILGR</sequence>
<reference key="1">
    <citation type="journal article" date="2000" name="Nature">
        <title>Sequence and analysis of chromosome 1 of the plant Arabidopsis thaliana.</title>
        <authorList>
            <person name="Theologis A."/>
            <person name="Ecker J.R."/>
            <person name="Palm C.J."/>
            <person name="Federspiel N.A."/>
            <person name="Kaul S."/>
            <person name="White O."/>
            <person name="Alonso J."/>
            <person name="Altafi H."/>
            <person name="Araujo R."/>
            <person name="Bowman C.L."/>
            <person name="Brooks S.Y."/>
            <person name="Buehler E."/>
            <person name="Chan A."/>
            <person name="Chao Q."/>
            <person name="Chen H."/>
            <person name="Cheuk R.F."/>
            <person name="Chin C.W."/>
            <person name="Chung M.K."/>
            <person name="Conn L."/>
            <person name="Conway A.B."/>
            <person name="Conway A.R."/>
            <person name="Creasy T.H."/>
            <person name="Dewar K."/>
            <person name="Dunn P."/>
            <person name="Etgu P."/>
            <person name="Feldblyum T.V."/>
            <person name="Feng J.-D."/>
            <person name="Fong B."/>
            <person name="Fujii C.Y."/>
            <person name="Gill J.E."/>
            <person name="Goldsmith A.D."/>
            <person name="Haas B."/>
            <person name="Hansen N.F."/>
            <person name="Hughes B."/>
            <person name="Huizar L."/>
            <person name="Hunter J.L."/>
            <person name="Jenkins J."/>
            <person name="Johnson-Hopson C."/>
            <person name="Khan S."/>
            <person name="Khaykin E."/>
            <person name="Kim C.J."/>
            <person name="Koo H.L."/>
            <person name="Kremenetskaia I."/>
            <person name="Kurtz D.B."/>
            <person name="Kwan A."/>
            <person name="Lam B."/>
            <person name="Langin-Hooper S."/>
            <person name="Lee A."/>
            <person name="Lee J.M."/>
            <person name="Lenz C.A."/>
            <person name="Li J.H."/>
            <person name="Li Y.-P."/>
            <person name="Lin X."/>
            <person name="Liu S.X."/>
            <person name="Liu Z.A."/>
            <person name="Luros J.S."/>
            <person name="Maiti R."/>
            <person name="Marziali A."/>
            <person name="Militscher J."/>
            <person name="Miranda M."/>
            <person name="Nguyen M."/>
            <person name="Nierman W.C."/>
            <person name="Osborne B.I."/>
            <person name="Pai G."/>
            <person name="Peterson J."/>
            <person name="Pham P.K."/>
            <person name="Rizzo M."/>
            <person name="Rooney T."/>
            <person name="Rowley D."/>
            <person name="Sakano H."/>
            <person name="Salzberg S.L."/>
            <person name="Schwartz J.R."/>
            <person name="Shinn P."/>
            <person name="Southwick A.M."/>
            <person name="Sun H."/>
            <person name="Tallon L.J."/>
            <person name="Tambunga G."/>
            <person name="Toriumi M.J."/>
            <person name="Town C.D."/>
            <person name="Utterback T."/>
            <person name="Van Aken S."/>
            <person name="Vaysberg M."/>
            <person name="Vysotskaia V.S."/>
            <person name="Walker M."/>
            <person name="Wu D."/>
            <person name="Yu G."/>
            <person name="Fraser C.M."/>
            <person name="Venter J.C."/>
            <person name="Davis R.W."/>
        </authorList>
    </citation>
    <scope>NUCLEOTIDE SEQUENCE [LARGE SCALE GENOMIC DNA]</scope>
    <source>
        <strain>cv. Columbia</strain>
    </source>
</reference>
<reference key="2">
    <citation type="journal article" date="2017" name="Plant J.">
        <title>Araport11: a complete reannotation of the Arabidopsis thaliana reference genome.</title>
        <authorList>
            <person name="Cheng C.Y."/>
            <person name="Krishnakumar V."/>
            <person name="Chan A.P."/>
            <person name="Thibaud-Nissen F."/>
            <person name="Schobel S."/>
            <person name="Town C.D."/>
        </authorList>
    </citation>
    <scope>GENOME REANNOTATION</scope>
    <source>
        <strain>cv. Columbia</strain>
    </source>
</reference>
<reference key="3">
    <citation type="journal article" date="2004" name="Genome Res.">
        <title>Whole genome sequence comparisons and 'full-length' cDNA sequences: a combined approach to evaluate and improve Arabidopsis genome annotation.</title>
        <authorList>
            <person name="Castelli V."/>
            <person name="Aury J.-M."/>
            <person name="Jaillon O."/>
            <person name="Wincker P."/>
            <person name="Clepet C."/>
            <person name="Menard M."/>
            <person name="Cruaud C."/>
            <person name="Quetier F."/>
            <person name="Scarpelli C."/>
            <person name="Schaechter V."/>
            <person name="Temple G."/>
            <person name="Caboche M."/>
            <person name="Weissenbach J."/>
            <person name="Salanoubat M."/>
        </authorList>
    </citation>
    <scope>NUCLEOTIDE SEQUENCE [LARGE SCALE MRNA]</scope>
    <source>
        <strain>cv. Columbia</strain>
    </source>
</reference>
<evidence type="ECO:0000250" key="1"/>
<evidence type="ECO:0000250" key="2">
    <source>
        <dbReference type="UniProtKB" id="Q9LPZ9"/>
    </source>
</evidence>
<evidence type="ECO:0000255" key="3"/>
<evidence type="ECO:0000255" key="4">
    <source>
        <dbReference type="PROSITE-ProRule" id="PRU00038"/>
    </source>
</evidence>
<evidence type="ECO:0000255" key="5">
    <source>
        <dbReference type="PROSITE-ProRule" id="PRU00159"/>
    </source>
</evidence>
<evidence type="ECO:0000255" key="6">
    <source>
        <dbReference type="PROSITE-ProRule" id="PRU00315"/>
    </source>
</evidence>
<evidence type="ECO:0000255" key="7">
    <source>
        <dbReference type="PROSITE-ProRule" id="PRU10027"/>
    </source>
</evidence>
<evidence type="ECO:0000305" key="8"/>
<comment type="catalytic activity">
    <reaction>
        <text>L-seryl-[protein] + ATP = O-phospho-L-seryl-[protein] + ADP + H(+)</text>
        <dbReference type="Rhea" id="RHEA:17989"/>
        <dbReference type="Rhea" id="RHEA-COMP:9863"/>
        <dbReference type="Rhea" id="RHEA-COMP:11604"/>
        <dbReference type="ChEBI" id="CHEBI:15378"/>
        <dbReference type="ChEBI" id="CHEBI:29999"/>
        <dbReference type="ChEBI" id="CHEBI:30616"/>
        <dbReference type="ChEBI" id="CHEBI:83421"/>
        <dbReference type="ChEBI" id="CHEBI:456216"/>
        <dbReference type="EC" id="2.7.11.1"/>
    </reaction>
</comment>
<comment type="catalytic activity">
    <reaction>
        <text>L-threonyl-[protein] + ATP = O-phospho-L-threonyl-[protein] + ADP + H(+)</text>
        <dbReference type="Rhea" id="RHEA:46608"/>
        <dbReference type="Rhea" id="RHEA-COMP:11060"/>
        <dbReference type="Rhea" id="RHEA-COMP:11605"/>
        <dbReference type="ChEBI" id="CHEBI:15378"/>
        <dbReference type="ChEBI" id="CHEBI:30013"/>
        <dbReference type="ChEBI" id="CHEBI:30616"/>
        <dbReference type="ChEBI" id="CHEBI:61977"/>
        <dbReference type="ChEBI" id="CHEBI:456216"/>
        <dbReference type="EC" id="2.7.11.1"/>
    </reaction>
</comment>
<comment type="subcellular location">
    <subcellularLocation>
        <location evidence="1">Cell membrane</location>
        <topology evidence="1">Single-pass type I membrane protein</topology>
    </subcellularLocation>
</comment>
<comment type="similarity">
    <text evidence="5">Belongs to the protein kinase superfamily. Ser/Thr protein kinase family.</text>
</comment>
<comment type="sequence caution" evidence="8">
    <conflict type="erroneous gene model prediction">
        <sequence resource="EMBL-CDS" id="AAC13892"/>
    </conflict>
</comment>
<comment type="sequence caution" evidence="8">
    <conflict type="frameshift">
        <sequence resource="EMBL" id="BX816606"/>
    </conflict>
</comment>
<feature type="signal peptide" evidence="3">
    <location>
        <begin position="1"/>
        <end position="24"/>
    </location>
</feature>
<feature type="chain" id="PRO_0000401322" description="G-type lectin S-receptor-like serine/threonine-protein kinase At1g61480">
    <location>
        <begin position="25"/>
        <end position="809"/>
    </location>
</feature>
<feature type="topological domain" description="Extracellular" evidence="3">
    <location>
        <begin position="25"/>
        <end position="425"/>
    </location>
</feature>
<feature type="transmembrane region" description="Helical" evidence="3">
    <location>
        <begin position="426"/>
        <end position="446"/>
    </location>
</feature>
<feature type="topological domain" description="Cytoplasmic" evidence="3">
    <location>
        <begin position="447"/>
        <end position="809"/>
    </location>
</feature>
<feature type="domain" description="Bulb-type lectin" evidence="4">
    <location>
        <begin position="25"/>
        <end position="144"/>
    </location>
</feature>
<feature type="domain" description="EGF-like">
    <location>
        <begin position="278"/>
        <end position="314"/>
    </location>
</feature>
<feature type="domain" description="PAN" evidence="6">
    <location>
        <begin position="333"/>
        <end position="415"/>
    </location>
</feature>
<feature type="domain" description="Protein kinase" evidence="5">
    <location>
        <begin position="496"/>
        <end position="781"/>
    </location>
</feature>
<feature type="region of interest" description="CaM-binding" evidence="1">
    <location>
        <begin position="585"/>
        <end position="602"/>
    </location>
</feature>
<feature type="active site" description="Proton acceptor" evidence="5 7">
    <location>
        <position position="621"/>
    </location>
</feature>
<feature type="binding site" evidence="5">
    <location>
        <begin position="502"/>
        <end position="510"/>
    </location>
    <ligand>
        <name>ATP</name>
        <dbReference type="ChEBI" id="CHEBI:30616"/>
    </ligand>
</feature>
<feature type="binding site" evidence="5">
    <location>
        <position position="524"/>
    </location>
    <ligand>
        <name>ATP</name>
        <dbReference type="ChEBI" id="CHEBI:30616"/>
    </ligand>
</feature>
<feature type="modified residue" description="Phosphoserine" evidence="2">
    <location>
        <position position="530"/>
    </location>
</feature>
<feature type="modified residue" description="Phosphoserine" evidence="2">
    <location>
        <position position="545"/>
    </location>
</feature>
<feature type="modified residue" description="Phosphoserine" evidence="2">
    <location>
        <position position="625"/>
    </location>
</feature>
<feature type="modified residue" description="Phosphoserine" evidence="2">
    <location>
        <position position="638"/>
    </location>
</feature>
<feature type="modified residue" description="Phosphothreonine" evidence="2">
    <location>
        <position position="655"/>
    </location>
</feature>
<feature type="modified residue" description="Phosphoserine" evidence="2">
    <location>
        <position position="698"/>
    </location>
</feature>
<feature type="modified residue" description="Phosphoserine" evidence="2">
    <location>
        <position position="792"/>
    </location>
</feature>
<feature type="glycosylation site" description="N-linked (GlcNAc...) asparagine" evidence="3">
    <location>
        <position position="53"/>
    </location>
</feature>
<feature type="glycosylation site" description="N-linked (GlcNAc...) asparagine" evidence="3">
    <location>
        <position position="88"/>
    </location>
</feature>
<feature type="glycosylation site" description="N-linked (GlcNAc...) asparagine" evidence="3">
    <location>
        <position position="94"/>
    </location>
</feature>
<feature type="glycosylation site" description="N-linked (GlcNAc...) asparagine" evidence="3">
    <location>
        <position position="103"/>
    </location>
</feature>
<feature type="glycosylation site" description="N-linked (GlcNAc...) asparagine" evidence="3">
    <location>
        <position position="117"/>
    </location>
</feature>
<feature type="glycosylation site" description="N-linked (GlcNAc...) asparagine" evidence="3">
    <location>
        <position position="134"/>
    </location>
</feature>
<feature type="glycosylation site" description="N-linked (GlcNAc...) asparagine" evidence="3">
    <location>
        <position position="236"/>
    </location>
</feature>
<feature type="glycosylation site" description="N-linked (GlcNAc...) asparagine" evidence="3">
    <location>
        <position position="320"/>
    </location>
</feature>
<feature type="glycosylation site" description="N-linked (GlcNAc...) asparagine" evidence="3">
    <location>
        <position position="375"/>
    </location>
</feature>
<feature type="disulfide bond" evidence="1">
    <location>
        <begin position="282"/>
        <end position="294"/>
    </location>
</feature>
<feature type="disulfide bond" evidence="1">
    <location>
        <begin position="288"/>
        <end position="302"/>
    </location>
</feature>
<feature type="disulfide bond" evidence="1">
    <location>
        <begin position="368"/>
        <end position="389"/>
    </location>
</feature>
<feature type="disulfide bond" evidence="1">
    <location>
        <begin position="372"/>
        <end position="378"/>
    </location>
</feature>
<gene>
    <name type="ordered locus">At1g61480</name>
    <name type="ORF">T1F9.2</name>
</gene>
<name>Y1148_ARATH</name>
<proteinExistence type="evidence at transcript level"/>
<keyword id="KW-0067">ATP-binding</keyword>
<keyword id="KW-1003">Cell membrane</keyword>
<keyword id="KW-1015">Disulfide bond</keyword>
<keyword id="KW-0245">EGF-like domain</keyword>
<keyword id="KW-0325">Glycoprotein</keyword>
<keyword id="KW-0418">Kinase</keyword>
<keyword id="KW-0430">Lectin</keyword>
<keyword id="KW-0472">Membrane</keyword>
<keyword id="KW-0547">Nucleotide-binding</keyword>
<keyword id="KW-0597">Phosphoprotein</keyword>
<keyword id="KW-0675">Receptor</keyword>
<keyword id="KW-1185">Reference proteome</keyword>
<keyword id="KW-0723">Serine/threonine-protein kinase</keyword>
<keyword id="KW-0732">Signal</keyword>
<keyword id="KW-0808">Transferase</keyword>
<keyword id="KW-0812">Transmembrane</keyword>
<keyword id="KW-1133">Transmembrane helix</keyword>
<protein>
    <recommendedName>
        <fullName>G-type lectin S-receptor-like serine/threonine-protein kinase At1g61480</fullName>
        <ecNumber>2.7.11.1</ecNumber>
    </recommendedName>
</protein>
<organism>
    <name type="scientific">Arabidopsis thaliana</name>
    <name type="common">Mouse-ear cress</name>
    <dbReference type="NCBI Taxonomy" id="3702"/>
    <lineage>
        <taxon>Eukaryota</taxon>
        <taxon>Viridiplantae</taxon>
        <taxon>Streptophyta</taxon>
        <taxon>Embryophyta</taxon>
        <taxon>Tracheophyta</taxon>
        <taxon>Spermatophyta</taxon>
        <taxon>Magnoliopsida</taxon>
        <taxon>eudicotyledons</taxon>
        <taxon>Gunneridae</taxon>
        <taxon>Pentapetalae</taxon>
        <taxon>rosids</taxon>
        <taxon>malvids</taxon>
        <taxon>Brassicales</taxon>
        <taxon>Brassicaceae</taxon>
        <taxon>Camelineae</taxon>
        <taxon>Arabidopsis</taxon>
    </lineage>
</organism>
<dbReference type="EC" id="2.7.11.1"/>
<dbReference type="EMBL" id="AC004255">
    <property type="protein sequence ID" value="AAC13892.1"/>
    <property type="status" value="ALT_SEQ"/>
    <property type="molecule type" value="Genomic_DNA"/>
</dbReference>
<dbReference type="EMBL" id="CP002684">
    <property type="protein sequence ID" value="AEE33843.1"/>
    <property type="molecule type" value="Genomic_DNA"/>
</dbReference>
<dbReference type="EMBL" id="BX816606">
    <property type="status" value="NOT_ANNOTATED_CDS"/>
    <property type="molecule type" value="mRNA"/>
</dbReference>
<dbReference type="PIR" id="A96640">
    <property type="entry name" value="A96640"/>
</dbReference>
<dbReference type="RefSeq" id="NP_176343.2">
    <property type="nucleotide sequence ID" value="NM_104829.3"/>
</dbReference>
<dbReference type="SMR" id="O64771"/>
<dbReference type="STRING" id="3702.O64771"/>
<dbReference type="GlyGen" id="O64771">
    <property type="glycosylation" value="9 sites"/>
</dbReference>
<dbReference type="PaxDb" id="3702-AT1G61480.1"/>
<dbReference type="EnsemblPlants" id="AT1G61480.1">
    <property type="protein sequence ID" value="AT1G61480.1"/>
    <property type="gene ID" value="AT1G61480"/>
</dbReference>
<dbReference type="GeneID" id="842442"/>
<dbReference type="Gramene" id="AT1G61480.1">
    <property type="protein sequence ID" value="AT1G61480.1"/>
    <property type="gene ID" value="AT1G61480"/>
</dbReference>
<dbReference type="KEGG" id="ath:AT1G61480"/>
<dbReference type="Araport" id="AT1G61480"/>
<dbReference type="TAIR" id="AT1G61480"/>
<dbReference type="eggNOG" id="ENOG502QSUU">
    <property type="taxonomic scope" value="Eukaryota"/>
</dbReference>
<dbReference type="HOGENOM" id="CLU_000288_116_1_1"/>
<dbReference type="InParanoid" id="O64771"/>
<dbReference type="OMA" id="RIMFFAS"/>
<dbReference type="PhylomeDB" id="O64771"/>
<dbReference type="PRO" id="PR:O64771"/>
<dbReference type="Proteomes" id="UP000006548">
    <property type="component" value="Chromosome 1"/>
</dbReference>
<dbReference type="ExpressionAtlas" id="O64771">
    <property type="expression patterns" value="baseline and differential"/>
</dbReference>
<dbReference type="GO" id="GO:0005886">
    <property type="term" value="C:plasma membrane"/>
    <property type="evidence" value="ECO:0007669"/>
    <property type="project" value="UniProtKB-SubCell"/>
</dbReference>
<dbReference type="GO" id="GO:0005524">
    <property type="term" value="F:ATP binding"/>
    <property type="evidence" value="ECO:0007669"/>
    <property type="project" value="UniProtKB-KW"/>
</dbReference>
<dbReference type="GO" id="GO:0005516">
    <property type="term" value="F:calmodulin binding"/>
    <property type="evidence" value="ECO:0000250"/>
    <property type="project" value="UniProtKB"/>
</dbReference>
<dbReference type="GO" id="GO:0030246">
    <property type="term" value="F:carbohydrate binding"/>
    <property type="evidence" value="ECO:0007669"/>
    <property type="project" value="UniProtKB-KW"/>
</dbReference>
<dbReference type="GO" id="GO:0106310">
    <property type="term" value="F:protein serine kinase activity"/>
    <property type="evidence" value="ECO:0007669"/>
    <property type="project" value="RHEA"/>
</dbReference>
<dbReference type="GO" id="GO:0004674">
    <property type="term" value="F:protein serine/threonine kinase activity"/>
    <property type="evidence" value="ECO:0000250"/>
    <property type="project" value="UniProtKB"/>
</dbReference>
<dbReference type="GO" id="GO:0031625">
    <property type="term" value="F:ubiquitin protein ligase binding"/>
    <property type="evidence" value="ECO:0007669"/>
    <property type="project" value="UniProtKB-ARBA"/>
</dbReference>
<dbReference type="GO" id="GO:0048544">
    <property type="term" value="P:recognition of pollen"/>
    <property type="evidence" value="ECO:0007669"/>
    <property type="project" value="InterPro"/>
</dbReference>
<dbReference type="CDD" id="cd00028">
    <property type="entry name" value="B_lectin"/>
    <property type="match status" value="1"/>
</dbReference>
<dbReference type="CDD" id="cd01098">
    <property type="entry name" value="PAN_AP_plant"/>
    <property type="match status" value="1"/>
</dbReference>
<dbReference type="CDD" id="cd14066">
    <property type="entry name" value="STKc_IRAK"/>
    <property type="match status" value="1"/>
</dbReference>
<dbReference type="FunFam" id="1.10.510.10:FF:000345">
    <property type="entry name" value="G-type lectin S-receptor-like serine/threonine-protein kinase"/>
    <property type="match status" value="1"/>
</dbReference>
<dbReference type="FunFam" id="2.90.10.10:FF:000003">
    <property type="entry name" value="G-type lectin S-receptor-like serine/threonine-protein kinase"/>
    <property type="match status" value="1"/>
</dbReference>
<dbReference type="FunFam" id="3.30.200.20:FF:000401">
    <property type="entry name" value="G-type lectin S-receptor-like serine/threonine-protein kinase SD1-29"/>
    <property type="match status" value="1"/>
</dbReference>
<dbReference type="Gene3D" id="2.90.10.10">
    <property type="entry name" value="Bulb-type lectin domain"/>
    <property type="match status" value="1"/>
</dbReference>
<dbReference type="Gene3D" id="3.30.200.20">
    <property type="entry name" value="Phosphorylase Kinase, domain 1"/>
    <property type="match status" value="1"/>
</dbReference>
<dbReference type="Gene3D" id="1.10.510.10">
    <property type="entry name" value="Transferase(Phosphotransferase) domain 1"/>
    <property type="match status" value="1"/>
</dbReference>
<dbReference type="InterPro" id="IPR001480">
    <property type="entry name" value="Bulb-type_lectin_dom"/>
</dbReference>
<dbReference type="InterPro" id="IPR036426">
    <property type="entry name" value="Bulb-type_lectin_dom_sf"/>
</dbReference>
<dbReference type="InterPro" id="IPR011009">
    <property type="entry name" value="Kinase-like_dom_sf"/>
</dbReference>
<dbReference type="InterPro" id="IPR003609">
    <property type="entry name" value="Pan_app"/>
</dbReference>
<dbReference type="InterPro" id="IPR000719">
    <property type="entry name" value="Prot_kinase_dom"/>
</dbReference>
<dbReference type="InterPro" id="IPR017441">
    <property type="entry name" value="Protein_kinase_ATP_BS"/>
</dbReference>
<dbReference type="InterPro" id="IPR021820">
    <property type="entry name" value="S-locus_recpt_kinase_C"/>
</dbReference>
<dbReference type="InterPro" id="IPR000858">
    <property type="entry name" value="S_locus_glycoprot_dom"/>
</dbReference>
<dbReference type="InterPro" id="IPR001245">
    <property type="entry name" value="Ser-Thr/Tyr_kinase_cat_dom"/>
</dbReference>
<dbReference type="InterPro" id="IPR008271">
    <property type="entry name" value="Ser/Thr_kinase_AS"/>
</dbReference>
<dbReference type="InterPro" id="IPR024171">
    <property type="entry name" value="SRK-like_kinase"/>
</dbReference>
<dbReference type="PANTHER" id="PTHR27002:SF506">
    <property type="entry name" value="ATP BINDING _ PROTEIN KINASE"/>
    <property type="match status" value="1"/>
</dbReference>
<dbReference type="PANTHER" id="PTHR27002">
    <property type="entry name" value="RECEPTOR-LIKE SERINE/THREONINE-PROTEIN KINASE SD1-8"/>
    <property type="match status" value="1"/>
</dbReference>
<dbReference type="Pfam" id="PF01453">
    <property type="entry name" value="B_lectin"/>
    <property type="match status" value="1"/>
</dbReference>
<dbReference type="Pfam" id="PF11883">
    <property type="entry name" value="DUF3403"/>
    <property type="match status" value="1"/>
</dbReference>
<dbReference type="Pfam" id="PF08276">
    <property type="entry name" value="PAN_2"/>
    <property type="match status" value="1"/>
</dbReference>
<dbReference type="Pfam" id="PF07714">
    <property type="entry name" value="PK_Tyr_Ser-Thr"/>
    <property type="match status" value="1"/>
</dbReference>
<dbReference type="Pfam" id="PF00954">
    <property type="entry name" value="S_locus_glycop"/>
    <property type="match status" value="1"/>
</dbReference>
<dbReference type="PIRSF" id="PIRSF000641">
    <property type="entry name" value="SRK"/>
    <property type="match status" value="1"/>
</dbReference>
<dbReference type="SMART" id="SM00108">
    <property type="entry name" value="B_lectin"/>
    <property type="match status" value="1"/>
</dbReference>
<dbReference type="SMART" id="SM00473">
    <property type="entry name" value="PAN_AP"/>
    <property type="match status" value="1"/>
</dbReference>
<dbReference type="SMART" id="SM00220">
    <property type="entry name" value="S_TKc"/>
    <property type="match status" value="1"/>
</dbReference>
<dbReference type="SUPFAM" id="SSF51110">
    <property type="entry name" value="alpha-D-mannose-specific plant lectins"/>
    <property type="match status" value="1"/>
</dbReference>
<dbReference type="SUPFAM" id="SSF56112">
    <property type="entry name" value="Protein kinase-like (PK-like)"/>
    <property type="match status" value="1"/>
</dbReference>
<dbReference type="PROSITE" id="PS50927">
    <property type="entry name" value="BULB_LECTIN"/>
    <property type="match status" value="1"/>
</dbReference>
<dbReference type="PROSITE" id="PS50948">
    <property type="entry name" value="PAN"/>
    <property type="match status" value="1"/>
</dbReference>
<dbReference type="PROSITE" id="PS00107">
    <property type="entry name" value="PROTEIN_KINASE_ATP"/>
    <property type="match status" value="1"/>
</dbReference>
<dbReference type="PROSITE" id="PS50011">
    <property type="entry name" value="PROTEIN_KINASE_DOM"/>
    <property type="match status" value="1"/>
</dbReference>
<dbReference type="PROSITE" id="PS00108">
    <property type="entry name" value="PROTEIN_KINASE_ST"/>
    <property type="match status" value="1"/>
</dbReference>
<accession>O64771</accession>